<protein>
    <recommendedName>
        <fullName>Uncharacterized membrane protein YohP</fullName>
    </recommendedName>
</protein>
<proteinExistence type="evidence at protein level"/>
<organism>
    <name type="scientific">Escherichia coli (strain K12)</name>
    <dbReference type="NCBI Taxonomy" id="83333"/>
    <lineage>
        <taxon>Bacteria</taxon>
        <taxon>Pseudomonadati</taxon>
        <taxon>Pseudomonadota</taxon>
        <taxon>Gammaproteobacteria</taxon>
        <taxon>Enterobacterales</taxon>
        <taxon>Enterobacteriaceae</taxon>
        <taxon>Escherichia</taxon>
    </lineage>
</organism>
<evidence type="ECO:0000255" key="1"/>
<evidence type="ECO:0000269" key="2">
    <source>
    </source>
</evidence>
<evidence type="ECO:0000269" key="3">
    <source>
    </source>
</evidence>
<evidence type="ECO:0000269" key="4">
    <source>
    </source>
</evidence>
<evidence type="ECO:0000305" key="5">
    <source>
    </source>
</evidence>
<evidence type="ECO:0000305" key="6">
    <source>
    </source>
</evidence>
<feature type="chain" id="PRO_0000381986" description="Uncharacterized membrane protein YohP">
    <location>
        <begin position="1"/>
        <end position="27"/>
    </location>
</feature>
<feature type="transmembrane region" description="Helical" evidence="1">
    <location>
        <begin position="3"/>
        <end position="23"/>
    </location>
</feature>
<feature type="mutagenesis site" description="Protein mostly C-terminus inside. Both orientations found; when associated with 24-G." evidence="4">
    <original>K</original>
    <variation>G</variation>
    <location>
        <position position="2"/>
    </location>
</feature>
<feature type="mutagenesis site" description="Protein mostly C-terminus outside. Both orientations found; when associated with 2-G." evidence="4">
    <original>K</original>
    <variation>G</variation>
    <location>
        <position position="24"/>
    </location>
</feature>
<sequence length="27" mass="3092">MKIILWAVLIIFLIGLLVVTGVFKMIF</sequence>
<keyword id="KW-0997">Cell inner membrane</keyword>
<keyword id="KW-1003">Cell membrane</keyword>
<keyword id="KW-0472">Membrane</keyword>
<keyword id="KW-1185">Reference proteome</keyword>
<keyword id="KW-0346">Stress response</keyword>
<keyword id="KW-0812">Transmembrane</keyword>
<keyword id="KW-1133">Transmembrane helix</keyword>
<reference key="1">
    <citation type="journal article" date="1997" name="Science">
        <title>The complete genome sequence of Escherichia coli K-12.</title>
        <authorList>
            <person name="Blattner F.R."/>
            <person name="Plunkett G. III"/>
            <person name="Bloch C.A."/>
            <person name="Perna N.T."/>
            <person name="Burland V."/>
            <person name="Riley M."/>
            <person name="Collado-Vides J."/>
            <person name="Glasner J.D."/>
            <person name="Rode C.K."/>
            <person name="Mayhew G.F."/>
            <person name="Gregor J."/>
            <person name="Davis N.W."/>
            <person name="Kirkpatrick H.A."/>
            <person name="Goeden M.A."/>
            <person name="Rose D.J."/>
            <person name="Mau B."/>
            <person name="Shao Y."/>
        </authorList>
    </citation>
    <scope>NUCLEOTIDE SEQUENCE [LARGE SCALE GENOMIC DNA]</scope>
    <source>
        <strain>K12 / MG1655 / ATCC 47076</strain>
    </source>
</reference>
<reference key="2">
    <citation type="journal article" date="2006" name="Mol. Syst. Biol.">
        <title>Highly accurate genome sequences of Escherichia coli K-12 strains MG1655 and W3110.</title>
        <authorList>
            <person name="Hayashi K."/>
            <person name="Morooka N."/>
            <person name="Yamamoto Y."/>
            <person name="Fujita K."/>
            <person name="Isono K."/>
            <person name="Choi S."/>
            <person name="Ohtsubo E."/>
            <person name="Baba T."/>
            <person name="Wanner B.L."/>
            <person name="Mori H."/>
            <person name="Horiuchi T."/>
        </authorList>
    </citation>
    <scope>NUCLEOTIDE SEQUENCE [LARGE SCALE GENOMIC DNA]</scope>
    <source>
        <strain>K12 / W3110 / ATCC 27325 / DSM 5911</strain>
    </source>
</reference>
<reference key="3">
    <citation type="journal article" date="2008" name="Mol. Microbiol.">
        <title>Small membrane proteins found by comparative genomics and ribosome binding site models.</title>
        <authorList>
            <person name="Hemm M.R."/>
            <person name="Paul B.J."/>
            <person name="Schneider T.D."/>
            <person name="Storz G."/>
            <person name="Rudd K.E."/>
        </authorList>
    </citation>
    <scope>IDENTIFICATION</scope>
    <scope>SUBCELLULAR LOCATION</scope>
    <scope>INDUCTION</scope>
    <source>
        <strain>K12 / MG1655 / ATCC 47076</strain>
    </source>
</reference>
<reference key="4">
    <citation type="journal article" date="2010" name="J. Bacteriol.">
        <title>Small stress response proteins in Escherichia coli: proteins missed by classical proteomic studies.</title>
        <authorList>
            <person name="Hemm M.R."/>
            <person name="Paul B.J."/>
            <person name="Miranda-Rios J."/>
            <person name="Zhang A."/>
            <person name="Soltanzad N."/>
            <person name="Storz G."/>
        </authorList>
    </citation>
    <scope>INDUCTION</scope>
    <source>
        <strain>K12 / MG1655 / ATCC 47076</strain>
    </source>
</reference>
<reference key="5">
    <citation type="journal article" date="2011" name="J. Biol. Chem.">
        <title>Membrane localization of small proteins in Escherichia coli.</title>
        <authorList>
            <person name="Fontaine F."/>
            <person name="Fuchs R.T."/>
            <person name="Storz G."/>
        </authorList>
    </citation>
    <scope>SUBCELLULAR LOCATION</scope>
    <scope>TOPOLOGY</scope>
    <scope>MUTAGENESIS OF LYS-2 AND LYS-24</scope>
    <source>
        <strain>K12 / MG1655 / ATCC 47076</strain>
    </source>
</reference>
<accession>C1P609</accession>
<comment type="subcellular location">
    <subcellularLocation>
        <location evidence="5 6">Cell inner membrane</location>
        <topology evidence="2 4">Single-pass membrane protein</topology>
    </subcellularLocation>
    <text>May be able to insert into the membrane in both orientations. Depletion of SecE or YidC does not affect membrane insertion.</text>
</comment>
<comment type="induction">
    <text evidence="2 3">Expressed in exponential phase, strongly induced in stationary phase (PubMed:19121005) and in minimal glucose or glycerol medium, in low oxygen, by SDS/EDTA (envelope stress) and by H(2)O(2) (PubMed:19734316) (at protein level).</text>
</comment>
<name>YOHP_ECOLI</name>
<dbReference type="EMBL" id="U00096">
    <property type="protein sequence ID" value="ACO60001.1"/>
    <property type="molecule type" value="Genomic_DNA"/>
</dbReference>
<dbReference type="EMBL" id="AP009048">
    <property type="status" value="NOT_ANNOTATED_CDS"/>
    <property type="molecule type" value="Genomic_DNA"/>
</dbReference>
<dbReference type="RefSeq" id="WP_000691708.1">
    <property type="nucleotide sequence ID" value="NZ_STEB01000002.1"/>
</dbReference>
<dbReference type="RefSeq" id="YP_002791249.1">
    <property type="nucleotide sequence ID" value="NC_000913.3"/>
</dbReference>
<dbReference type="STRING" id="511145.b4679"/>
<dbReference type="PaxDb" id="511145-b4679"/>
<dbReference type="EnsemblBacteria" id="ACO60001">
    <property type="protein sequence ID" value="ACO60001"/>
    <property type="gene ID" value="b4679"/>
</dbReference>
<dbReference type="GeneID" id="7751636"/>
<dbReference type="GeneID" id="92805623"/>
<dbReference type="KEGG" id="eco:b4679"/>
<dbReference type="KEGG" id="ecoc:C3026_11990"/>
<dbReference type="PATRIC" id="fig|83333.103.peg.3008"/>
<dbReference type="InParanoid" id="C1P609"/>
<dbReference type="BioCyc" id="EcoCyc:MONOMER0-2879"/>
<dbReference type="PRO" id="PR:C1P609"/>
<dbReference type="Proteomes" id="UP000000625">
    <property type="component" value="Chromosome"/>
</dbReference>
<dbReference type="GO" id="GO:0005886">
    <property type="term" value="C:plasma membrane"/>
    <property type="evidence" value="ECO:0000314"/>
    <property type="project" value="EcoCyc"/>
</dbReference>
<dbReference type="NCBIfam" id="NF011345">
    <property type="entry name" value="PRK14762.1"/>
    <property type="match status" value="1"/>
</dbReference>
<gene>
    <name type="primary">yohP</name>
    <name type="ordered locus">b4679</name>
    <name type="ordered locus">JW5358.1</name>
</gene>